<sequence length="141" mass="16312">MEIRVFRQEDFEEVITLWERCDLLRPWNDPEMDIERKMNHDVSLFLVAEVNGDVVGTVMGGYDGHRGSAYYLGVHPEFRGRGIANALLNRLEKKLIARGCPKIQINVPEDNDMVLGMYERLGYEHADVLSLGKRLIEDEEY</sequence>
<organism>
    <name type="scientific">Escherichia coli (strain K12)</name>
    <dbReference type="NCBI Taxonomy" id="83333"/>
    <lineage>
        <taxon>Bacteria</taxon>
        <taxon>Pseudomonadati</taxon>
        <taxon>Pseudomonadota</taxon>
        <taxon>Gammaproteobacteria</taxon>
        <taxon>Enterobacterales</taxon>
        <taxon>Enterobacteriaceae</taxon>
        <taxon>Escherichia</taxon>
    </lineage>
</organism>
<reference key="1">
    <citation type="journal article" date="1997" name="Science">
        <title>The complete genome sequence of Escherichia coli K-12.</title>
        <authorList>
            <person name="Blattner F.R."/>
            <person name="Plunkett G. III"/>
            <person name="Bloch C.A."/>
            <person name="Perna N.T."/>
            <person name="Burland V."/>
            <person name="Riley M."/>
            <person name="Collado-Vides J."/>
            <person name="Glasner J.D."/>
            <person name="Rode C.K."/>
            <person name="Mayhew G.F."/>
            <person name="Gregor J."/>
            <person name="Davis N.W."/>
            <person name="Kirkpatrick H.A."/>
            <person name="Goeden M.A."/>
            <person name="Rose D.J."/>
            <person name="Mau B."/>
            <person name="Shao Y."/>
        </authorList>
    </citation>
    <scope>NUCLEOTIDE SEQUENCE [LARGE SCALE GENOMIC DNA]</scope>
    <source>
        <strain>K12 / MG1655 / ATCC 47076</strain>
    </source>
</reference>
<reference key="2">
    <citation type="journal article" date="2006" name="Mol. Syst. Biol.">
        <title>Highly accurate genome sequences of Escherichia coli K-12 strains MG1655 and W3110.</title>
        <authorList>
            <person name="Hayashi K."/>
            <person name="Morooka N."/>
            <person name="Yamamoto Y."/>
            <person name="Fujita K."/>
            <person name="Isono K."/>
            <person name="Choi S."/>
            <person name="Ohtsubo E."/>
            <person name="Baba T."/>
            <person name="Wanner B.L."/>
            <person name="Mori H."/>
            <person name="Horiuchi T."/>
        </authorList>
    </citation>
    <scope>NUCLEOTIDE SEQUENCE [LARGE SCALE GENOMIC DNA]</scope>
    <source>
        <strain>K12 / W3110 / ATCC 27325 / DSM 5911</strain>
    </source>
</reference>
<keyword id="KW-0002">3D-structure</keyword>
<keyword id="KW-0012">Acyltransferase</keyword>
<keyword id="KW-1185">Reference proteome</keyword>
<keyword id="KW-0808">Transferase</keyword>
<protein>
    <recommendedName>
        <fullName>Acetyltransferase YpeA</fullName>
        <ecNumber>2.3.1.-</ecNumber>
    </recommendedName>
</protein>
<comment type="similarity">
    <text evidence="1">Belongs to the acetyltransferase family. YpeA subfamily.</text>
</comment>
<gene>
    <name type="primary">ypeA</name>
    <name type="ordered locus">b2434</name>
    <name type="ordered locus">JW2427</name>
</gene>
<proteinExistence type="evidence at protein level"/>
<dbReference type="EC" id="2.3.1.-"/>
<dbReference type="EMBL" id="U00096">
    <property type="protein sequence ID" value="AAC75487.2"/>
    <property type="molecule type" value="Genomic_DNA"/>
</dbReference>
<dbReference type="EMBL" id="AP009048">
    <property type="protein sequence ID" value="BAE76714.1"/>
    <property type="molecule type" value="Genomic_DNA"/>
</dbReference>
<dbReference type="PIR" id="A65018">
    <property type="entry name" value="A65018"/>
</dbReference>
<dbReference type="RefSeq" id="NP_416929.4">
    <property type="nucleotide sequence ID" value="NC_000913.3"/>
</dbReference>
<dbReference type="RefSeq" id="WP_000405996.1">
    <property type="nucleotide sequence ID" value="NZ_LN832404.1"/>
</dbReference>
<dbReference type="PDB" id="4QUS">
    <property type="method" value="X-ray"/>
    <property type="resolution" value="1.28 A"/>
    <property type="chains" value="A/B=1-141"/>
</dbReference>
<dbReference type="PDB" id="4QVT">
    <property type="method" value="X-ray"/>
    <property type="resolution" value="1.95 A"/>
    <property type="chains" value="A/B/C/D/E/F/G/H=1-141"/>
</dbReference>
<dbReference type="PDBsum" id="4QUS"/>
<dbReference type="PDBsum" id="4QVT"/>
<dbReference type="SMR" id="P76539"/>
<dbReference type="BioGRID" id="4260749">
    <property type="interactions" value="26"/>
</dbReference>
<dbReference type="DIP" id="DIP-28085N"/>
<dbReference type="FunCoup" id="P76539">
    <property type="interactions" value="174"/>
</dbReference>
<dbReference type="IntAct" id="P76539">
    <property type="interactions" value="9"/>
</dbReference>
<dbReference type="STRING" id="511145.b2434"/>
<dbReference type="jPOST" id="P76539"/>
<dbReference type="PaxDb" id="511145-b2434"/>
<dbReference type="EnsemblBacteria" id="AAC75487">
    <property type="protein sequence ID" value="AAC75487"/>
    <property type="gene ID" value="b2434"/>
</dbReference>
<dbReference type="GeneID" id="946917"/>
<dbReference type="KEGG" id="ecj:JW2427"/>
<dbReference type="KEGG" id="eco:b2434"/>
<dbReference type="KEGG" id="ecoc:C3026_13520"/>
<dbReference type="PATRIC" id="fig|1411691.4.peg.4297"/>
<dbReference type="EchoBASE" id="EB3920"/>
<dbReference type="eggNOG" id="COG0456">
    <property type="taxonomic scope" value="Bacteria"/>
</dbReference>
<dbReference type="HOGENOM" id="CLU_013985_34_1_6"/>
<dbReference type="InParanoid" id="P76539"/>
<dbReference type="OMA" id="IAGFDGW"/>
<dbReference type="OrthoDB" id="1821130at2"/>
<dbReference type="PhylomeDB" id="P76539"/>
<dbReference type="BioCyc" id="EcoCyc:G7269-MONOMER"/>
<dbReference type="EvolutionaryTrace" id="P76539"/>
<dbReference type="PRO" id="PR:P76539"/>
<dbReference type="Proteomes" id="UP000000625">
    <property type="component" value="Chromosome"/>
</dbReference>
<dbReference type="GO" id="GO:0016747">
    <property type="term" value="F:acyltransferase activity, transferring groups other than amino-acyl groups"/>
    <property type="evidence" value="ECO:0007669"/>
    <property type="project" value="UniProtKB-UniRule"/>
</dbReference>
<dbReference type="CDD" id="cd04301">
    <property type="entry name" value="NAT_SF"/>
    <property type="match status" value="1"/>
</dbReference>
<dbReference type="Gene3D" id="3.40.630.30">
    <property type="match status" value="1"/>
</dbReference>
<dbReference type="HAMAP" id="MF_01127">
    <property type="entry name" value="Acetyltransf_YpeA"/>
    <property type="match status" value="1"/>
</dbReference>
<dbReference type="InterPro" id="IPR023072">
    <property type="entry name" value="Acetyltransferase_YpeA"/>
</dbReference>
<dbReference type="InterPro" id="IPR016181">
    <property type="entry name" value="Acyl_CoA_acyltransferase"/>
</dbReference>
<dbReference type="InterPro" id="IPR050832">
    <property type="entry name" value="Bact_Acetyltransf"/>
</dbReference>
<dbReference type="InterPro" id="IPR000182">
    <property type="entry name" value="GNAT_dom"/>
</dbReference>
<dbReference type="NCBIfam" id="NF002959">
    <property type="entry name" value="PRK03624.1"/>
    <property type="match status" value="1"/>
</dbReference>
<dbReference type="PANTHER" id="PTHR43877">
    <property type="entry name" value="AMINOALKYLPHOSPHONATE N-ACETYLTRANSFERASE-RELATED-RELATED"/>
    <property type="match status" value="1"/>
</dbReference>
<dbReference type="Pfam" id="PF00583">
    <property type="entry name" value="Acetyltransf_1"/>
    <property type="match status" value="1"/>
</dbReference>
<dbReference type="SUPFAM" id="SSF55729">
    <property type="entry name" value="Acyl-CoA N-acyltransferases (Nat)"/>
    <property type="match status" value="1"/>
</dbReference>
<dbReference type="PROSITE" id="PS51186">
    <property type="entry name" value="GNAT"/>
    <property type="match status" value="1"/>
</dbReference>
<feature type="chain" id="PRO_0000074620" description="Acetyltransferase YpeA">
    <location>
        <begin position="1"/>
        <end position="141"/>
    </location>
</feature>
<feature type="domain" description="N-acetyltransferase">
    <location>
        <begin position="1"/>
        <end position="141"/>
    </location>
</feature>
<feature type="strand" evidence="2">
    <location>
        <begin position="2"/>
        <end position="5"/>
    </location>
</feature>
<feature type="helix" evidence="2">
    <location>
        <begin position="8"/>
        <end position="10"/>
    </location>
</feature>
<feature type="helix" evidence="2">
    <location>
        <begin position="11"/>
        <end position="20"/>
    </location>
</feature>
<feature type="helix" evidence="2">
    <location>
        <begin position="30"/>
        <end position="40"/>
    </location>
</feature>
<feature type="helix" evidence="2">
    <location>
        <begin position="42"/>
        <end position="44"/>
    </location>
</feature>
<feature type="strand" evidence="2">
    <location>
        <begin position="45"/>
        <end position="50"/>
    </location>
</feature>
<feature type="strand" evidence="2">
    <location>
        <begin position="53"/>
        <end position="62"/>
    </location>
</feature>
<feature type="strand" evidence="2">
    <location>
        <begin position="67"/>
        <end position="74"/>
    </location>
</feature>
<feature type="helix" evidence="3">
    <location>
        <begin position="76"/>
        <end position="78"/>
    </location>
</feature>
<feature type="strand" evidence="2">
    <location>
        <begin position="80"/>
        <end position="82"/>
    </location>
</feature>
<feature type="helix" evidence="2">
    <location>
        <begin position="83"/>
        <end position="97"/>
    </location>
</feature>
<feature type="strand" evidence="2">
    <location>
        <begin position="102"/>
        <end position="107"/>
    </location>
</feature>
<feature type="helix" evidence="2">
    <location>
        <begin position="112"/>
        <end position="120"/>
    </location>
</feature>
<feature type="strand" evidence="3">
    <location>
        <begin position="124"/>
        <end position="126"/>
    </location>
</feature>
<feature type="strand" evidence="2">
    <location>
        <begin position="127"/>
        <end position="136"/>
    </location>
</feature>
<accession>P76539</accession>
<accession>Q2MAJ2</accession>
<evidence type="ECO:0000305" key="1"/>
<evidence type="ECO:0007829" key="2">
    <source>
        <dbReference type="PDB" id="4QUS"/>
    </source>
</evidence>
<evidence type="ECO:0007829" key="3">
    <source>
        <dbReference type="PDB" id="4QVT"/>
    </source>
</evidence>
<name>YPEA_ECOLI</name>